<proteinExistence type="inferred from homology"/>
<keyword id="KW-1167">Clathrin- and caveolin-independent endocytosis of virus by host</keyword>
<keyword id="KW-1165">Clathrin-mediated endocytosis of virus by host</keyword>
<keyword id="KW-1015">Disulfide bond</keyword>
<keyword id="KW-1170">Fusion of virus membrane with host endosomal membrane</keyword>
<keyword id="KW-1168">Fusion of virus membrane with host membrane</keyword>
<keyword id="KW-0325">Glycoprotein</keyword>
<keyword id="KW-0348">Hemagglutinin</keyword>
<keyword id="KW-1032">Host cell membrane</keyword>
<keyword id="KW-1043">Host membrane</keyword>
<keyword id="KW-0945">Host-virus interaction</keyword>
<keyword id="KW-0449">Lipoprotein</keyword>
<keyword id="KW-0472">Membrane</keyword>
<keyword id="KW-0564">Palmitate</keyword>
<keyword id="KW-0732">Signal</keyword>
<keyword id="KW-0812">Transmembrane</keyword>
<keyword id="KW-1133">Transmembrane helix</keyword>
<keyword id="KW-1161">Viral attachment to host cell</keyword>
<keyword id="KW-0261">Viral envelope protein</keyword>
<keyword id="KW-1162">Viral penetration into host cytoplasm</keyword>
<keyword id="KW-0946">Virion</keyword>
<keyword id="KW-1164">Virus endocytosis by host</keyword>
<keyword id="KW-1160">Virus entry into host cell</keyword>
<accession>P03443</accession>
<dbReference type="EMBL" id="M25287">
    <property type="protein sequence ID" value="AAA43220.1"/>
    <property type="molecule type" value="Genomic_RNA"/>
</dbReference>
<dbReference type="EMBL" id="J02102">
    <property type="protein sequence ID" value="AAA43179.1"/>
    <property type="molecule type" value="Genomic_RNA"/>
</dbReference>
<dbReference type="PIR" id="A04054">
    <property type="entry name" value="HMIVH4"/>
</dbReference>
<dbReference type="SMR" id="P03443"/>
<dbReference type="GlyCosmos" id="P03443">
    <property type="glycosylation" value="5 sites, No reported glycans"/>
</dbReference>
<dbReference type="ABCD" id="P03443">
    <property type="antibodies" value="1 sequenced antibody"/>
</dbReference>
<dbReference type="GO" id="GO:0020002">
    <property type="term" value="C:host cell plasma membrane"/>
    <property type="evidence" value="ECO:0007669"/>
    <property type="project" value="UniProtKB-SubCell"/>
</dbReference>
<dbReference type="GO" id="GO:0016020">
    <property type="term" value="C:membrane"/>
    <property type="evidence" value="ECO:0007669"/>
    <property type="project" value="UniProtKB-UniRule"/>
</dbReference>
<dbReference type="GO" id="GO:0019031">
    <property type="term" value="C:viral envelope"/>
    <property type="evidence" value="ECO:0007669"/>
    <property type="project" value="UniProtKB-UniRule"/>
</dbReference>
<dbReference type="GO" id="GO:0055036">
    <property type="term" value="C:virion membrane"/>
    <property type="evidence" value="ECO:0007669"/>
    <property type="project" value="UniProtKB-SubCell"/>
</dbReference>
<dbReference type="GO" id="GO:0046789">
    <property type="term" value="F:host cell surface receptor binding"/>
    <property type="evidence" value="ECO:0007669"/>
    <property type="project" value="UniProtKB-UniRule"/>
</dbReference>
<dbReference type="GO" id="GO:0075512">
    <property type="term" value="P:clathrin-dependent endocytosis of virus by host cell"/>
    <property type="evidence" value="ECO:0007669"/>
    <property type="project" value="UniProtKB-UniRule"/>
</dbReference>
<dbReference type="GO" id="GO:0039654">
    <property type="term" value="P:fusion of virus membrane with host endosome membrane"/>
    <property type="evidence" value="ECO:0007669"/>
    <property type="project" value="UniProtKB-UniRule"/>
</dbReference>
<dbReference type="GO" id="GO:0019064">
    <property type="term" value="P:fusion of virus membrane with host plasma membrane"/>
    <property type="evidence" value="ECO:0007669"/>
    <property type="project" value="InterPro"/>
</dbReference>
<dbReference type="GO" id="GO:0046761">
    <property type="term" value="P:viral budding from plasma membrane"/>
    <property type="evidence" value="ECO:0007669"/>
    <property type="project" value="UniProtKB-UniRule"/>
</dbReference>
<dbReference type="GO" id="GO:0019062">
    <property type="term" value="P:virion attachment to host cell"/>
    <property type="evidence" value="ECO:0007669"/>
    <property type="project" value="UniProtKB-KW"/>
</dbReference>
<dbReference type="Gene3D" id="3.90.20.10">
    <property type="match status" value="1"/>
</dbReference>
<dbReference type="Gene3D" id="3.90.209.20">
    <property type="match status" value="1"/>
</dbReference>
<dbReference type="HAMAP" id="MF_04072">
    <property type="entry name" value="INFV_HEMA"/>
    <property type="match status" value="1"/>
</dbReference>
<dbReference type="InterPro" id="IPR008980">
    <property type="entry name" value="Capsid_hemagglutn"/>
</dbReference>
<dbReference type="InterPro" id="IPR013828">
    <property type="entry name" value="Hemagglutn_HA1_a/b_dom_sf"/>
</dbReference>
<dbReference type="InterPro" id="IPR000149">
    <property type="entry name" value="Hemagglutn_influenz_A"/>
</dbReference>
<dbReference type="InterPro" id="IPR001364">
    <property type="entry name" value="Hemagglutn_influenz_A/B"/>
</dbReference>
<dbReference type="Pfam" id="PF00509">
    <property type="entry name" value="Hemagglutinin"/>
    <property type="match status" value="1"/>
</dbReference>
<dbReference type="PRINTS" id="PR00330">
    <property type="entry name" value="HEMAGGLUTN1"/>
</dbReference>
<dbReference type="PRINTS" id="PR00329">
    <property type="entry name" value="HEMAGGLUTN12"/>
</dbReference>
<dbReference type="SUPFAM" id="SSF58064">
    <property type="entry name" value="Influenza hemagglutinin (stalk)"/>
    <property type="match status" value="1"/>
</dbReference>
<dbReference type="SUPFAM" id="SSF49818">
    <property type="entry name" value="Viral protein domain"/>
    <property type="match status" value="1"/>
</dbReference>
<sequence length="564" mass="63382">MLSITILFLLIAEGSSQNYTGNPVICLGHHAVSNGTMVKTLTDDQVEVVTAQELVESQHLPELCPSPLRLVDGQTCDIVNGALGSPGCDHLNGAEWDVFIERPTAVDTCYPFDVPDYQSLRSILANNGKFEFIAEEFQWNTVKQNGKSGACKRANVNDFFNRLNWLTKSDGDAYPLQNLTKVNNGDYARLYIWGVHHPSTDTEQTNLYKNNPGRVTVSTKTSQTSVVPNIGSRPWVRGQSGRISFYWTIVEPGDLIVFNTIGNLIAPRGHYKLNSQKKSTILNTAVPIGSCVSKCHTDRGSISTTKPFQNISRISIRDCPKYVKQGSLKLATGMRNIPEKATRGLFGAIAGFIENGWQGLIDGWYGFRHQNAEGTGTAADLKSTQAAIDQINGKLNRLIEKTNEKYHQIEKEFEQVEGRIQDLEKYVEDTKIDLWSYNAEFLVALENQHTIDVTDSEMNKLFERVRRQLRENAEDKGNGCFEIFHQCDNNCIESIRNGTYDHDIYRDEAINNRFQIQGVKLTQGYKDIILWISFSISCFLLVALLLAFILWACQNGNIRCQICI</sequence>
<feature type="signal peptide" evidence="1">
    <location>
        <begin position="1"/>
        <end position="16"/>
    </location>
</feature>
<feature type="chain" id="PRO_0000440446" description="Hemagglutinin" evidence="1">
    <location>
        <begin position="17"/>
        <end position="564"/>
    </location>
</feature>
<feature type="chain" id="PRO_0000038904" description="Hemagglutinin HA1 chain">
    <location>
        <begin position="17"/>
        <end position="342"/>
    </location>
</feature>
<feature type="chain" id="PRO_0000038905" description="Hemagglutinin HA2 chain" evidence="1">
    <location>
        <begin position="344"/>
        <end position="564"/>
    </location>
</feature>
<feature type="topological domain" description="Extracellular" evidence="1">
    <location>
        <begin position="17"/>
        <end position="527"/>
    </location>
</feature>
<feature type="transmembrane region" description="Helical" evidence="1">
    <location>
        <begin position="528"/>
        <end position="548"/>
    </location>
</feature>
<feature type="topological domain" description="Cytoplasmic" evidence="1">
    <location>
        <begin position="549"/>
        <end position="564"/>
    </location>
</feature>
<feature type="site" description="Cleavage; by host" evidence="1">
    <location>
        <begin position="343"/>
        <end position="344"/>
    </location>
</feature>
<feature type="lipid moiety-binding region" description="S-palmitoyl cysteine; by host" evidence="1">
    <location>
        <position position="553"/>
    </location>
</feature>
<feature type="lipid moiety-binding region" description="S-palmitoyl cysteine; by host" evidence="1">
    <location>
        <position position="560"/>
    </location>
</feature>
<feature type="lipid moiety-binding region" description="S-palmitoyl cysteine; by host" evidence="1">
    <location>
        <position position="563"/>
    </location>
</feature>
<feature type="glycosylation site" description="N-linked (GlcNAc...) asparagine; by host" evidence="1">
    <location>
        <position position="18"/>
    </location>
</feature>
<feature type="glycosylation site" description="N-linked (GlcNAc...) asparagine; by host" evidence="1">
    <location>
        <position position="34"/>
    </location>
</feature>
<feature type="glycosylation site" description="N-linked (GlcNAc...) asparagine; by host" evidence="1">
    <location>
        <position position="178"/>
    </location>
</feature>
<feature type="glycosylation site" description="N-linked (GlcNAc...) asparagine; by host" evidence="1">
    <location>
        <position position="310"/>
    </location>
</feature>
<feature type="glycosylation site" description="N-linked (GlcNAc...) asparagine; by host" evidence="1">
    <location>
        <position position="497"/>
    </location>
</feature>
<feature type="disulfide bond" description="Interchain (between HA1 and HA2 chains)" evidence="1">
    <location>
        <begin position="26"/>
        <end position="480"/>
    </location>
</feature>
<feature type="disulfide bond" evidence="1">
    <location>
        <begin position="64"/>
        <end position="291"/>
    </location>
</feature>
<feature type="disulfide bond" evidence="1">
    <location>
        <begin position="76"/>
        <end position="88"/>
    </location>
</feature>
<feature type="disulfide bond" evidence="1">
    <location>
        <begin position="109"/>
        <end position="151"/>
    </location>
</feature>
<feature type="disulfide bond" evidence="1">
    <location>
        <begin position="295"/>
        <end position="319"/>
    </location>
</feature>
<feature type="disulfide bond" evidence="1">
    <location>
        <begin position="487"/>
        <end position="491"/>
    </location>
</feature>
<feature type="sequence conflict" description="In Ref. 2; AAA43179." evidence="2" ref="2">
    <original>R</original>
    <variation>K</variation>
    <location>
        <position position="69"/>
    </location>
</feature>
<reference key="1">
    <citation type="journal article" date="1989" name="Virology">
        <title>Distinct lineages of influenza virus H4 hemagglutinin genes in different regions of the world.</title>
        <authorList>
            <person name="Donis R.O."/>
            <person name="Bean W.J."/>
            <person name="Kawaoka Y."/>
            <person name="Webster R.G."/>
        </authorList>
    </citation>
    <scope>NUCLEOTIDE SEQUENCE [GENOMIC RNA]</scope>
</reference>
<reference key="2">
    <citation type="journal article" date="1981" name="Proc. Natl. Acad. Sci. U.S.A.">
        <title>Sequence relationships among the hemagglutinin genes of 12 subtypes of influenza A virus.</title>
        <authorList>
            <person name="Air G.M."/>
        </authorList>
    </citation>
    <scope>NUCLEOTIDE SEQUENCE [GENOMIC RNA] OF 1-101</scope>
</reference>
<name>HEMA_I76A1</name>
<protein>
    <recommendedName>
        <fullName evidence="1">Hemagglutinin</fullName>
    </recommendedName>
    <component>
        <recommendedName>
            <fullName evidence="1">Hemagglutinin HA1 chain</fullName>
        </recommendedName>
    </component>
    <component>
        <recommendedName>
            <fullName evidence="1">Hemagglutinin HA2 chain</fullName>
        </recommendedName>
    </component>
</protein>
<comment type="function">
    <text>Binds to sialic acid-containing receptors on the cell surface, bringing about the attachment of the virus particle to the cell. This attachment induces virion internalization of about two third of the virus particles through clathrin-dependent endocytosis and about one third through a clathrin- and caveolin-independent pathway. Plays a major role in the determination of host range restriction and virulence. Class I viral fusion protein. Responsible for penetration of the virus into the cell cytoplasm by mediating the fusion of the membrane of the endocytosed virus particle with the endosomal membrane. Low pH in endosomes induces an irreversible conformational change in HA2, releasing the fusion hydrophobic peptide. Several trimers are required to form a competent fusion pore.</text>
</comment>
<comment type="function">
    <text evidence="1">Binds to sialic acid-containing receptors on the cell surface, bringing about the attachment of the virus particle to the cell. This attachment induces virion internalization either through clathrin-dependent endocytosis or through clathrin- and caveolin-independent pathway. Plays a major role in the determination of host range restriction and virulence. Class I viral fusion protein. Responsible for penetration of the virus into the cell cytoplasm by mediating the fusion of the membrane of the endocytosed virus particle with the endosomal membrane. Low pH in endosomes induces an irreversible conformational change in HA2, releasing the fusion hydrophobic peptide. Several trimers are required to form a competent fusion pore.</text>
</comment>
<comment type="subunit">
    <text evidence="1">Homotrimer of disulfide-linked HA1-HA2.</text>
</comment>
<comment type="subcellular location">
    <subcellularLocation>
        <location evidence="1">Virion membrane</location>
        <topology evidence="1">Single-pass type I membrane protein</topology>
    </subcellularLocation>
    <subcellularLocation>
        <location evidence="1">Host apical cell membrane</location>
        <topology evidence="1">Single-pass type I membrane protein</topology>
    </subcellularLocation>
    <text evidence="1">Targeted to the apical plasma membrane in epithelial polarized cells through a signal present in the transmembrane domain. Associated with glycosphingolipid- and cholesterol-enriched detergent-resistant lipid rafts.</text>
</comment>
<comment type="PTM">
    <text evidence="1">Palmitoylated.</text>
</comment>
<comment type="PTM">
    <text evidence="1">In natural infection, inactive HA is matured into HA1 and HA2 outside the cell by one or more trypsin-like, arginine-specific endoprotease secreted by the bronchial epithelial cells. One identified protease that may be involved in this process is secreted in lungs by club cells.</text>
</comment>
<comment type="miscellaneous">
    <text>Major glycoprotein, comprises over 80% of the envelope proteins present in virus particle.</text>
</comment>
<comment type="miscellaneous">
    <text>The extent of infection into host organism is determined by HA. Influenza viruses bud from the apical surface of polarized epithelial cells (e.g. bronchial epithelial cells) into lumen of lungs and are therefore usually pneumotropic. The reason is that HA is cleaved by tryptase clara which is restricted to lungs. However, HAs of H5 and H7 pantropic avian viruses subtypes can be cleaved by furin and subtilisin-type enzymes, allowing the virus to grow in other organs than lungs.</text>
</comment>
<comment type="miscellaneous">
    <text evidence="2">The influenza A genome consist of 8 RNA segments. Genetic variation of hemagglutinin and/or neuraminidase genes results in the emergence of new influenza strains. The mechanism of variation can be the result of point mutations or the result of genetic reassortment between segments of two different strains.</text>
</comment>
<comment type="similarity">
    <text evidence="1">Belongs to the influenza viruses hemagglutinin family.</text>
</comment>
<organismHost>
    <name type="scientific">Aves</name>
    <dbReference type="NCBI Taxonomy" id="8782"/>
</organismHost>
<organismHost>
    <name type="scientific">Sus scrofa</name>
    <name type="common">Pig</name>
    <dbReference type="NCBI Taxonomy" id="9823"/>
</organismHost>
<organism>
    <name type="scientific">Influenza A virus (strain A/Duck/Alberta/28/1976 H4N6)</name>
    <dbReference type="NCBI Taxonomy" id="385638"/>
    <lineage>
        <taxon>Viruses</taxon>
        <taxon>Riboviria</taxon>
        <taxon>Orthornavirae</taxon>
        <taxon>Negarnaviricota</taxon>
        <taxon>Polyploviricotina</taxon>
        <taxon>Insthoviricetes</taxon>
        <taxon>Articulavirales</taxon>
        <taxon>Orthomyxoviridae</taxon>
        <taxon>Alphainfluenzavirus</taxon>
        <taxon>Alphainfluenzavirus influenzae</taxon>
        <taxon>Influenza A virus</taxon>
    </lineage>
</organism>
<evidence type="ECO:0000255" key="1">
    <source>
        <dbReference type="HAMAP-Rule" id="MF_04072"/>
    </source>
</evidence>
<evidence type="ECO:0000305" key="2"/>
<gene>
    <name evidence="1" type="primary">HA</name>
</gene>